<accession>A2AS55</accession>
<accession>Q8BH84</accession>
<name>ANR16_MOUSE</name>
<feature type="chain" id="PRO_0000320068" description="Ankyrin repeat domain-containing protein 16">
    <location>
        <begin position="1"/>
        <end position="361"/>
    </location>
</feature>
<feature type="repeat" description="ANK 1" evidence="1">
    <location>
        <begin position="36"/>
        <end position="66"/>
    </location>
</feature>
<feature type="repeat" description="ANK 2" evidence="1">
    <location>
        <begin position="70"/>
        <end position="99"/>
    </location>
</feature>
<feature type="repeat" description="ANK 3" evidence="1">
    <location>
        <begin position="103"/>
        <end position="132"/>
    </location>
</feature>
<feature type="repeat" description="ANK 4" evidence="1">
    <location>
        <begin position="136"/>
        <end position="165"/>
    </location>
</feature>
<feature type="repeat" description="ANK 5" evidence="1">
    <location>
        <begin position="170"/>
        <end position="200"/>
    </location>
</feature>
<feature type="repeat" description="ANK 6" evidence="1">
    <location>
        <begin position="204"/>
        <end position="233"/>
    </location>
</feature>
<feature type="repeat" description="ANK 7" evidence="1">
    <location>
        <begin position="238"/>
        <end position="268"/>
    </location>
</feature>
<feature type="repeat" description="ANK 8" evidence="1">
    <location>
        <begin position="273"/>
        <end position="302"/>
    </location>
</feature>
<feature type="repeat" description="ANK 9" evidence="1">
    <location>
        <begin position="306"/>
        <end position="335"/>
    </location>
</feature>
<feature type="site" description="Required to capture Ser that is misactivated by AARS/AlaRS" evidence="2">
    <location>
        <position position="102"/>
    </location>
</feature>
<feature type="site" description="Required to capture Ser that is misactivated by AARS/AlaRS" evidence="2">
    <location>
        <position position="135"/>
    </location>
</feature>
<feature type="site" description="Required to capture Ser that is misactivated by AARS/AlaRS" evidence="2">
    <location>
        <position position="165"/>
    </location>
</feature>
<feature type="splice variant" id="VSP_031593" description="In isoform 2." evidence="3 4">
    <original>AMHGCLEAV</original>
    <variation>GTPCKLWSL</variation>
    <location>
        <begin position="179"/>
        <end position="187"/>
    </location>
</feature>
<feature type="splice variant" id="VSP_031594" description="In isoform 2." evidence="3 4">
    <location>
        <begin position="188"/>
        <end position="361"/>
    </location>
</feature>
<feature type="mutagenesis site" description="In ANKRD16(3XR); abolished ability to enhance hydrolysis of Ser-mischarged tRNA(Ala); when associated with R-135 and R-165." evidence="2">
    <original>K</original>
    <variation>R</variation>
    <location>
        <position position="102"/>
    </location>
</feature>
<feature type="mutagenesis site" description="In ANKRD16(3XR); abolished ability to enhance hydrolysis of Ser-mischarged tRNA(Ala); when associated with R-102 and R-165." evidence="2">
    <original>K</original>
    <variation>R</variation>
    <location>
        <position position="135"/>
    </location>
</feature>
<feature type="mutagenesis site" description="In ANKRD16(3XR); abolished ability to enhance hydrolysis of Ser-mischarged tRNA(Ala); when associated with R-102 and R-135." evidence="2">
    <original>K</original>
    <variation>R</variation>
    <location>
        <position position="165"/>
    </location>
</feature>
<sequence>MALPGDPRRLCRLVQEGRLRDLQEELAVARGCRGPAGDTLLHCAARHGRQDILAYLVEAWSMDIEATNRDYKRPLHEAASMGHRDCVRYLLGRGAVVDSLKKADWTPLMMACTRKNLDVIQDLVEHGANPLLKNKDGWNSFHIASREGHPVILRYLLTVCPDAWKTESNIRRTPLHTAAMHGCLEAVQVLLERCHYEPDCRDNCGVTPFMDAIQCGHVSIAKLLLEQHKACSSAADSMGAQALHRAAVTGQDEAIRFLVCGLGIDVDVRAKSSQLTALHYAAKEGQTNTVQTLLSLGADINSTDERNRSVLHLACAGQHVACTRLLLQSGLKDSEDLTGTLAQQLTRSVDILQDFDHDVKS</sequence>
<proteinExistence type="evidence at protein level"/>
<dbReference type="EMBL" id="AK052460">
    <property type="protein sequence ID" value="BAC35002.1"/>
    <property type="molecule type" value="mRNA"/>
</dbReference>
<dbReference type="EMBL" id="AK085853">
    <property type="protein sequence ID" value="BAC39552.1"/>
    <property type="molecule type" value="mRNA"/>
</dbReference>
<dbReference type="EMBL" id="AL845548">
    <property type="status" value="NOT_ANNOTATED_CDS"/>
    <property type="molecule type" value="Genomic_DNA"/>
</dbReference>
<dbReference type="EMBL" id="BC116229">
    <property type="protein sequence ID" value="AAI16230.1"/>
    <property type="molecule type" value="mRNA"/>
</dbReference>
<dbReference type="EMBL" id="BC116230">
    <property type="protein sequence ID" value="AAI16231.1"/>
    <property type="molecule type" value="mRNA"/>
</dbReference>
<dbReference type="CCDS" id="CCDS50502.1">
    <molecule id="A2AS55-1"/>
</dbReference>
<dbReference type="RefSeq" id="NP_796242.2">
    <molecule id="A2AS55-1"/>
    <property type="nucleotide sequence ID" value="NM_177268.4"/>
</dbReference>
<dbReference type="SMR" id="A2AS55"/>
<dbReference type="FunCoup" id="A2AS55">
    <property type="interactions" value="2698"/>
</dbReference>
<dbReference type="IntAct" id="A2AS55">
    <property type="interactions" value="17"/>
</dbReference>
<dbReference type="STRING" id="10090.ENSMUSP00000052056"/>
<dbReference type="PhosphoSitePlus" id="A2AS55"/>
<dbReference type="PaxDb" id="10090-ENSMUSP00000052056"/>
<dbReference type="ProteomicsDB" id="296254">
    <molecule id="A2AS55-1"/>
</dbReference>
<dbReference type="ProteomicsDB" id="296255">
    <molecule id="A2AS55-2"/>
</dbReference>
<dbReference type="Pumba" id="A2AS55"/>
<dbReference type="Antibodypedia" id="51456">
    <property type="antibodies" value="33 antibodies from 14 providers"/>
</dbReference>
<dbReference type="DNASU" id="320816"/>
<dbReference type="Ensembl" id="ENSMUST00000056108.12">
    <molecule id="A2AS55-1"/>
    <property type="protein sequence ID" value="ENSMUSP00000052056.6"/>
    <property type="gene ID" value="ENSMUSG00000047909.12"/>
</dbReference>
<dbReference type="GeneID" id="320816"/>
<dbReference type="KEGG" id="mmu:320816"/>
<dbReference type="UCSC" id="uc008ijg.2">
    <molecule id="A2AS55-2"/>
    <property type="organism name" value="mouse"/>
</dbReference>
<dbReference type="UCSC" id="uc012bqv.1">
    <molecule id="A2AS55-1"/>
    <property type="organism name" value="mouse"/>
</dbReference>
<dbReference type="AGR" id="MGI:2444796"/>
<dbReference type="CTD" id="54522"/>
<dbReference type="MGI" id="MGI:2444796">
    <property type="gene designation" value="Ankrd16"/>
</dbReference>
<dbReference type="VEuPathDB" id="HostDB:ENSMUSG00000047909"/>
<dbReference type="eggNOG" id="KOG0504">
    <property type="taxonomic scope" value="Eukaryota"/>
</dbReference>
<dbReference type="GeneTree" id="ENSGT00940000153969"/>
<dbReference type="InParanoid" id="A2AS55"/>
<dbReference type="OMA" id="TRCQYEP"/>
<dbReference type="OrthoDB" id="4772757at2759"/>
<dbReference type="PhylomeDB" id="A2AS55"/>
<dbReference type="TreeFam" id="TF329520"/>
<dbReference type="BioGRID-ORCS" id="320816">
    <property type="hits" value="2 hits in 78 CRISPR screens"/>
</dbReference>
<dbReference type="ChiTaRS" id="Ankrd16">
    <property type="organism name" value="mouse"/>
</dbReference>
<dbReference type="PRO" id="PR:A2AS55"/>
<dbReference type="Proteomes" id="UP000000589">
    <property type="component" value="Chromosome 2"/>
</dbReference>
<dbReference type="RNAct" id="A2AS55">
    <property type="molecule type" value="protein"/>
</dbReference>
<dbReference type="Bgee" id="ENSMUSG00000047909">
    <property type="expression patterns" value="Expressed in metanephric renal vesicle and 235 other cell types or tissues"/>
</dbReference>
<dbReference type="ExpressionAtlas" id="A2AS55">
    <property type="expression patterns" value="baseline and differential"/>
</dbReference>
<dbReference type="GO" id="GO:0005737">
    <property type="term" value="C:cytoplasm"/>
    <property type="evidence" value="ECO:0000314"/>
    <property type="project" value="UniProtKB"/>
</dbReference>
<dbReference type="GO" id="GO:0005634">
    <property type="term" value="C:nucleus"/>
    <property type="evidence" value="ECO:0000314"/>
    <property type="project" value="UniProtKB"/>
</dbReference>
<dbReference type="GO" id="GO:0006400">
    <property type="term" value="P:tRNA modification"/>
    <property type="evidence" value="ECO:0000314"/>
    <property type="project" value="UniProtKB"/>
</dbReference>
<dbReference type="FunFam" id="1.25.40.20:FF:000318">
    <property type="entry name" value="Ankyrin repeat domain 16"/>
    <property type="match status" value="1"/>
</dbReference>
<dbReference type="FunFam" id="1.25.40.20:FF:000336">
    <property type="entry name" value="Ankyrin repeat domain-containing protein 16"/>
    <property type="match status" value="1"/>
</dbReference>
<dbReference type="FunFam" id="1.25.40.20:FF:000522">
    <property type="entry name" value="Ankyrin repeat domain-containing protein 16"/>
    <property type="match status" value="1"/>
</dbReference>
<dbReference type="Gene3D" id="1.25.40.20">
    <property type="entry name" value="Ankyrin repeat-containing domain"/>
    <property type="match status" value="3"/>
</dbReference>
<dbReference type="InterPro" id="IPR002110">
    <property type="entry name" value="Ankyrin_rpt"/>
</dbReference>
<dbReference type="InterPro" id="IPR036770">
    <property type="entry name" value="Ankyrin_rpt-contain_sf"/>
</dbReference>
<dbReference type="PANTHER" id="PTHR24173">
    <property type="entry name" value="ANKYRIN REPEAT CONTAINING"/>
    <property type="match status" value="1"/>
</dbReference>
<dbReference type="PANTHER" id="PTHR24173:SF74">
    <property type="entry name" value="ANKYRIN REPEAT DOMAIN-CONTAINING PROTEIN 16"/>
    <property type="match status" value="1"/>
</dbReference>
<dbReference type="Pfam" id="PF12796">
    <property type="entry name" value="Ank_2"/>
    <property type="match status" value="4"/>
</dbReference>
<dbReference type="PRINTS" id="PR01415">
    <property type="entry name" value="ANKYRIN"/>
</dbReference>
<dbReference type="SMART" id="SM00248">
    <property type="entry name" value="ANK"/>
    <property type="match status" value="9"/>
</dbReference>
<dbReference type="SUPFAM" id="SSF48403">
    <property type="entry name" value="Ankyrin repeat"/>
    <property type="match status" value="1"/>
</dbReference>
<dbReference type="PROSITE" id="PS50297">
    <property type="entry name" value="ANK_REP_REGION"/>
    <property type="match status" value="1"/>
</dbReference>
<dbReference type="PROSITE" id="PS50088">
    <property type="entry name" value="ANK_REPEAT"/>
    <property type="match status" value="4"/>
</dbReference>
<gene>
    <name evidence="6" type="primary">Ankrd16</name>
</gene>
<comment type="function">
    <text evidence="2">Required to prevent the misactivation of serine (Ser) with tRNA(Ala) by promoting the hydrolysis of Ser-mischarged tRNA(Ala), thereby playing a role in translational fidelity (PubMed:29769718). Binds directly to the catalytic domain of AARS/AlaRS and captures Ser that is misactivated by AARS/AlaRS, preventing the charging of Ser adenylates to tRNA(Ala) and precluding Ser misincorporation in nascent peptides (PubMed:29769718).</text>
</comment>
<comment type="subunit">
    <text evidence="2">Interacts with AARS; the interaction is direct.</text>
</comment>
<comment type="interaction">
    <interactant intactId="EBI-20710644">
        <id>A2AS55-1</id>
    </interactant>
    <interactant intactId="EBI-11566807">
        <id>Q8BGQ7</id>
        <label>Aars1</label>
    </interactant>
    <organismsDiffer>false</organismsDiffer>
    <experiments>6</experiments>
</comment>
<comment type="subcellular location">
    <subcellularLocation>
        <location evidence="2">Cytoplasm</location>
    </subcellularLocation>
    <subcellularLocation>
        <location evidence="2">Nucleus</location>
    </subcellularLocation>
</comment>
<comment type="alternative products">
    <event type="alternative splicing"/>
    <isoform>
        <id>A2AS55-1</id>
        <name>1</name>
        <sequence type="displayed"/>
    </isoform>
    <isoform>
        <id>A2AS55-2</id>
        <name>2</name>
        <sequence type="described" ref="VSP_031593 VSP_031594"/>
    </isoform>
</comment>
<comment type="tissue specificity">
    <text evidence="2">Widely expressed in brain (at protein level).</text>
</comment>
<comment type="domain">
    <text evidence="2">Side chains of Lys-102, Lys-135 and Lys-165 capture Ser that is misactivated by AARS/AlaRS.</text>
</comment>
<comment type="disruption phenotype">
    <text evidence="2">No visible phenotype (PubMed:29769718). Loss of Ankrd16 in mice with a 'sticky' phenotype (mice homozygous for the variant 'Glu-734' in Aars/AlaRS) results in early embryonic lethality (PubMed:29769718). Conditional deletion in postnatal Purkinje cells in mice with a 'sticky' phenotype exacerbates the 'sticky' phenotype and causes widespread protein aggregation and neuron loss (PubMed:29769718).</text>
</comment>
<keyword id="KW-0025">Alternative splicing</keyword>
<keyword id="KW-0040">ANK repeat</keyword>
<keyword id="KW-0963">Cytoplasm</keyword>
<keyword id="KW-0539">Nucleus</keyword>
<keyword id="KW-1185">Reference proteome</keyword>
<keyword id="KW-0677">Repeat</keyword>
<organism>
    <name type="scientific">Mus musculus</name>
    <name type="common">Mouse</name>
    <dbReference type="NCBI Taxonomy" id="10090"/>
    <lineage>
        <taxon>Eukaryota</taxon>
        <taxon>Metazoa</taxon>
        <taxon>Chordata</taxon>
        <taxon>Craniata</taxon>
        <taxon>Vertebrata</taxon>
        <taxon>Euteleostomi</taxon>
        <taxon>Mammalia</taxon>
        <taxon>Eutheria</taxon>
        <taxon>Euarchontoglires</taxon>
        <taxon>Glires</taxon>
        <taxon>Rodentia</taxon>
        <taxon>Myomorpha</taxon>
        <taxon>Muroidea</taxon>
        <taxon>Muridae</taxon>
        <taxon>Murinae</taxon>
        <taxon>Mus</taxon>
        <taxon>Mus</taxon>
    </lineage>
</organism>
<reference key="1">
    <citation type="journal article" date="2005" name="Science">
        <title>The transcriptional landscape of the mammalian genome.</title>
        <authorList>
            <person name="Carninci P."/>
            <person name="Kasukawa T."/>
            <person name="Katayama S."/>
            <person name="Gough J."/>
            <person name="Frith M.C."/>
            <person name="Maeda N."/>
            <person name="Oyama R."/>
            <person name="Ravasi T."/>
            <person name="Lenhard B."/>
            <person name="Wells C."/>
            <person name="Kodzius R."/>
            <person name="Shimokawa K."/>
            <person name="Bajic V.B."/>
            <person name="Brenner S.E."/>
            <person name="Batalov S."/>
            <person name="Forrest A.R."/>
            <person name="Zavolan M."/>
            <person name="Davis M.J."/>
            <person name="Wilming L.G."/>
            <person name="Aidinis V."/>
            <person name="Allen J.E."/>
            <person name="Ambesi-Impiombato A."/>
            <person name="Apweiler R."/>
            <person name="Aturaliya R.N."/>
            <person name="Bailey T.L."/>
            <person name="Bansal M."/>
            <person name="Baxter L."/>
            <person name="Beisel K.W."/>
            <person name="Bersano T."/>
            <person name="Bono H."/>
            <person name="Chalk A.M."/>
            <person name="Chiu K.P."/>
            <person name="Choudhary V."/>
            <person name="Christoffels A."/>
            <person name="Clutterbuck D.R."/>
            <person name="Crowe M.L."/>
            <person name="Dalla E."/>
            <person name="Dalrymple B.P."/>
            <person name="de Bono B."/>
            <person name="Della Gatta G."/>
            <person name="di Bernardo D."/>
            <person name="Down T."/>
            <person name="Engstrom P."/>
            <person name="Fagiolini M."/>
            <person name="Faulkner G."/>
            <person name="Fletcher C.F."/>
            <person name="Fukushima T."/>
            <person name="Furuno M."/>
            <person name="Futaki S."/>
            <person name="Gariboldi M."/>
            <person name="Georgii-Hemming P."/>
            <person name="Gingeras T.R."/>
            <person name="Gojobori T."/>
            <person name="Green R.E."/>
            <person name="Gustincich S."/>
            <person name="Harbers M."/>
            <person name="Hayashi Y."/>
            <person name="Hensch T.K."/>
            <person name="Hirokawa N."/>
            <person name="Hill D."/>
            <person name="Huminiecki L."/>
            <person name="Iacono M."/>
            <person name="Ikeo K."/>
            <person name="Iwama A."/>
            <person name="Ishikawa T."/>
            <person name="Jakt M."/>
            <person name="Kanapin A."/>
            <person name="Katoh M."/>
            <person name="Kawasawa Y."/>
            <person name="Kelso J."/>
            <person name="Kitamura H."/>
            <person name="Kitano H."/>
            <person name="Kollias G."/>
            <person name="Krishnan S.P."/>
            <person name="Kruger A."/>
            <person name="Kummerfeld S.K."/>
            <person name="Kurochkin I.V."/>
            <person name="Lareau L.F."/>
            <person name="Lazarevic D."/>
            <person name="Lipovich L."/>
            <person name="Liu J."/>
            <person name="Liuni S."/>
            <person name="McWilliam S."/>
            <person name="Madan Babu M."/>
            <person name="Madera M."/>
            <person name="Marchionni L."/>
            <person name="Matsuda H."/>
            <person name="Matsuzawa S."/>
            <person name="Miki H."/>
            <person name="Mignone F."/>
            <person name="Miyake S."/>
            <person name="Morris K."/>
            <person name="Mottagui-Tabar S."/>
            <person name="Mulder N."/>
            <person name="Nakano N."/>
            <person name="Nakauchi H."/>
            <person name="Ng P."/>
            <person name="Nilsson R."/>
            <person name="Nishiguchi S."/>
            <person name="Nishikawa S."/>
            <person name="Nori F."/>
            <person name="Ohara O."/>
            <person name="Okazaki Y."/>
            <person name="Orlando V."/>
            <person name="Pang K.C."/>
            <person name="Pavan W.J."/>
            <person name="Pavesi G."/>
            <person name="Pesole G."/>
            <person name="Petrovsky N."/>
            <person name="Piazza S."/>
            <person name="Reed J."/>
            <person name="Reid J.F."/>
            <person name="Ring B.Z."/>
            <person name="Ringwald M."/>
            <person name="Rost B."/>
            <person name="Ruan Y."/>
            <person name="Salzberg S.L."/>
            <person name="Sandelin A."/>
            <person name="Schneider C."/>
            <person name="Schoenbach C."/>
            <person name="Sekiguchi K."/>
            <person name="Semple C.A."/>
            <person name="Seno S."/>
            <person name="Sessa L."/>
            <person name="Sheng Y."/>
            <person name="Shibata Y."/>
            <person name="Shimada H."/>
            <person name="Shimada K."/>
            <person name="Silva D."/>
            <person name="Sinclair B."/>
            <person name="Sperling S."/>
            <person name="Stupka E."/>
            <person name="Sugiura K."/>
            <person name="Sultana R."/>
            <person name="Takenaka Y."/>
            <person name="Taki K."/>
            <person name="Tammoja K."/>
            <person name="Tan S.L."/>
            <person name="Tang S."/>
            <person name="Taylor M.S."/>
            <person name="Tegner J."/>
            <person name="Teichmann S.A."/>
            <person name="Ueda H.R."/>
            <person name="van Nimwegen E."/>
            <person name="Verardo R."/>
            <person name="Wei C.L."/>
            <person name="Yagi K."/>
            <person name="Yamanishi H."/>
            <person name="Zabarovsky E."/>
            <person name="Zhu S."/>
            <person name="Zimmer A."/>
            <person name="Hide W."/>
            <person name="Bult C."/>
            <person name="Grimmond S.M."/>
            <person name="Teasdale R.D."/>
            <person name="Liu E.T."/>
            <person name="Brusic V."/>
            <person name="Quackenbush J."/>
            <person name="Wahlestedt C."/>
            <person name="Mattick J.S."/>
            <person name="Hume D.A."/>
            <person name="Kai C."/>
            <person name="Sasaki D."/>
            <person name="Tomaru Y."/>
            <person name="Fukuda S."/>
            <person name="Kanamori-Katayama M."/>
            <person name="Suzuki M."/>
            <person name="Aoki J."/>
            <person name="Arakawa T."/>
            <person name="Iida J."/>
            <person name="Imamura K."/>
            <person name="Itoh M."/>
            <person name="Kato T."/>
            <person name="Kawaji H."/>
            <person name="Kawagashira N."/>
            <person name="Kawashima T."/>
            <person name="Kojima M."/>
            <person name="Kondo S."/>
            <person name="Konno H."/>
            <person name="Nakano K."/>
            <person name="Ninomiya N."/>
            <person name="Nishio T."/>
            <person name="Okada M."/>
            <person name="Plessy C."/>
            <person name="Shibata K."/>
            <person name="Shiraki T."/>
            <person name="Suzuki S."/>
            <person name="Tagami M."/>
            <person name="Waki K."/>
            <person name="Watahiki A."/>
            <person name="Okamura-Oho Y."/>
            <person name="Suzuki H."/>
            <person name="Kawai J."/>
            <person name="Hayashizaki Y."/>
        </authorList>
    </citation>
    <scope>NUCLEOTIDE SEQUENCE [LARGE SCALE MRNA] (ISOFORM 2)</scope>
    <source>
        <strain>C57BL/6J</strain>
        <tissue>Heart</tissue>
        <tissue>Lung</tissue>
    </source>
</reference>
<reference key="2">
    <citation type="journal article" date="2009" name="PLoS Biol.">
        <title>Lineage-specific biology revealed by a finished genome assembly of the mouse.</title>
        <authorList>
            <person name="Church D.M."/>
            <person name="Goodstadt L."/>
            <person name="Hillier L.W."/>
            <person name="Zody M.C."/>
            <person name="Goldstein S."/>
            <person name="She X."/>
            <person name="Bult C.J."/>
            <person name="Agarwala R."/>
            <person name="Cherry J.L."/>
            <person name="DiCuccio M."/>
            <person name="Hlavina W."/>
            <person name="Kapustin Y."/>
            <person name="Meric P."/>
            <person name="Maglott D."/>
            <person name="Birtle Z."/>
            <person name="Marques A.C."/>
            <person name="Graves T."/>
            <person name="Zhou S."/>
            <person name="Teague B."/>
            <person name="Potamousis K."/>
            <person name="Churas C."/>
            <person name="Place M."/>
            <person name="Herschleb J."/>
            <person name="Runnheim R."/>
            <person name="Forrest D."/>
            <person name="Amos-Landgraf J."/>
            <person name="Schwartz D.C."/>
            <person name="Cheng Z."/>
            <person name="Lindblad-Toh K."/>
            <person name="Eichler E.E."/>
            <person name="Ponting C.P."/>
        </authorList>
    </citation>
    <scope>NUCLEOTIDE SEQUENCE [LARGE SCALE GENOMIC DNA]</scope>
    <source>
        <strain>C57BL/6J</strain>
    </source>
</reference>
<reference key="3">
    <citation type="journal article" date="2004" name="Genome Res.">
        <title>The status, quality, and expansion of the NIH full-length cDNA project: the Mammalian Gene Collection (MGC).</title>
        <authorList>
            <consortium name="The MGC Project Team"/>
        </authorList>
    </citation>
    <scope>NUCLEOTIDE SEQUENCE [LARGE SCALE MRNA] (ISOFORM 2)</scope>
</reference>
<reference key="4">
    <citation type="journal article" date="2018" name="Nature">
        <title>ANKRD16 prevents neuron loss caused by an editing-defective tRNA synthetase.</title>
        <authorList>
            <person name="Vo M.N."/>
            <person name="Terrey M."/>
            <person name="Lee J.W."/>
            <person name="Roy B."/>
            <person name="Moresco J.J."/>
            <person name="Sun L."/>
            <person name="Fu H."/>
            <person name="Liu Q."/>
            <person name="Weber T.G."/>
            <person name="Yates J.R. III"/>
            <person name="Fredrick K."/>
            <person name="Schimmel P."/>
            <person name="Ackerman S.L."/>
        </authorList>
    </citation>
    <scope>FUNCTION</scope>
    <scope>SUBCELLULAR LOCATION</scope>
    <scope>INTERACTION WITH AARS</scope>
    <scope>DOMAIN</scope>
    <scope>DISRUPTION PHENOTYPE</scope>
    <scope>TISSUE SPECIFICITY</scope>
    <scope>MUTAGENESIS OF LYS-102; LYS-135 AND LYS-165</scope>
</reference>
<evidence type="ECO:0000255" key="1"/>
<evidence type="ECO:0000269" key="2">
    <source>
    </source>
</evidence>
<evidence type="ECO:0000303" key="3">
    <source>
    </source>
</evidence>
<evidence type="ECO:0000303" key="4">
    <source>
    </source>
</evidence>
<evidence type="ECO:0000305" key="5"/>
<evidence type="ECO:0000312" key="6">
    <source>
        <dbReference type="MGI" id="MGI:2444796"/>
    </source>
</evidence>
<protein>
    <recommendedName>
        <fullName evidence="5">Ankyrin repeat domain-containing protein 16</fullName>
    </recommendedName>
</protein>